<proteinExistence type="inferred from homology"/>
<protein>
    <recommendedName>
        <fullName evidence="1">Phosphoribosylformylglycinamidine synthase</fullName>
        <shortName evidence="1">FGAM synthase</shortName>
        <shortName evidence="1">FGAMS</shortName>
        <ecNumber evidence="1">6.3.5.3</ecNumber>
    </recommendedName>
    <alternativeName>
        <fullName evidence="1">Formylglycinamide ribonucleotide amidotransferase</fullName>
        <shortName evidence="1">FGAR amidotransferase</shortName>
        <shortName evidence="1">FGAR-AT</shortName>
    </alternativeName>
</protein>
<name>PUR4_PSESM</name>
<organism>
    <name type="scientific">Pseudomonas syringae pv. tomato (strain ATCC BAA-871 / DC3000)</name>
    <dbReference type="NCBI Taxonomy" id="223283"/>
    <lineage>
        <taxon>Bacteria</taxon>
        <taxon>Pseudomonadati</taxon>
        <taxon>Pseudomonadota</taxon>
        <taxon>Gammaproteobacteria</taxon>
        <taxon>Pseudomonadales</taxon>
        <taxon>Pseudomonadaceae</taxon>
        <taxon>Pseudomonas</taxon>
    </lineage>
</organism>
<dbReference type="EC" id="6.3.5.3" evidence="1"/>
<dbReference type="EMBL" id="AE016853">
    <property type="protein sequence ID" value="AAO54980.1"/>
    <property type="molecule type" value="Genomic_DNA"/>
</dbReference>
<dbReference type="RefSeq" id="NP_791285.1">
    <property type="nucleotide sequence ID" value="NC_004578.1"/>
</dbReference>
<dbReference type="RefSeq" id="WP_011103562.1">
    <property type="nucleotide sequence ID" value="NC_004578.1"/>
</dbReference>
<dbReference type="SMR" id="Q886W6"/>
<dbReference type="STRING" id="223283.PSPTO_1459"/>
<dbReference type="GeneID" id="1183096"/>
<dbReference type="KEGG" id="pst:PSPTO_1459"/>
<dbReference type="PATRIC" id="fig|223283.9.peg.1481"/>
<dbReference type="eggNOG" id="COG0046">
    <property type="taxonomic scope" value="Bacteria"/>
</dbReference>
<dbReference type="eggNOG" id="COG0047">
    <property type="taxonomic scope" value="Bacteria"/>
</dbReference>
<dbReference type="HOGENOM" id="CLU_001031_0_2_6"/>
<dbReference type="OrthoDB" id="9804441at2"/>
<dbReference type="PhylomeDB" id="Q886W6"/>
<dbReference type="UniPathway" id="UPA00074">
    <property type="reaction ID" value="UER00128"/>
</dbReference>
<dbReference type="Proteomes" id="UP000002515">
    <property type="component" value="Chromosome"/>
</dbReference>
<dbReference type="GO" id="GO:0005737">
    <property type="term" value="C:cytoplasm"/>
    <property type="evidence" value="ECO:0007669"/>
    <property type="project" value="UniProtKB-SubCell"/>
</dbReference>
<dbReference type="GO" id="GO:0005524">
    <property type="term" value="F:ATP binding"/>
    <property type="evidence" value="ECO:0007669"/>
    <property type="project" value="UniProtKB-UniRule"/>
</dbReference>
<dbReference type="GO" id="GO:0046872">
    <property type="term" value="F:metal ion binding"/>
    <property type="evidence" value="ECO:0007669"/>
    <property type="project" value="UniProtKB-KW"/>
</dbReference>
<dbReference type="GO" id="GO:0004642">
    <property type="term" value="F:phosphoribosylformylglycinamidine synthase activity"/>
    <property type="evidence" value="ECO:0007669"/>
    <property type="project" value="UniProtKB-UniRule"/>
</dbReference>
<dbReference type="GO" id="GO:0006189">
    <property type="term" value="P:'de novo' IMP biosynthetic process"/>
    <property type="evidence" value="ECO:0007669"/>
    <property type="project" value="UniProtKB-UniRule"/>
</dbReference>
<dbReference type="CDD" id="cd01740">
    <property type="entry name" value="GATase1_FGAR_AT"/>
    <property type="match status" value="1"/>
</dbReference>
<dbReference type="CDD" id="cd02203">
    <property type="entry name" value="PurL_repeat1"/>
    <property type="match status" value="1"/>
</dbReference>
<dbReference type="CDD" id="cd02204">
    <property type="entry name" value="PurL_repeat2"/>
    <property type="match status" value="1"/>
</dbReference>
<dbReference type="FunFam" id="1.10.8.750:FF:000002">
    <property type="entry name" value="Phosphoribosylformylglycinamidine synthase"/>
    <property type="match status" value="1"/>
</dbReference>
<dbReference type="FunFam" id="3.30.1330.10:FF:000002">
    <property type="entry name" value="Phosphoribosylformylglycinamidine synthase"/>
    <property type="match status" value="1"/>
</dbReference>
<dbReference type="FunFam" id="3.30.1330.10:FF:000005">
    <property type="entry name" value="Phosphoribosylformylglycinamidine synthase"/>
    <property type="match status" value="1"/>
</dbReference>
<dbReference type="FunFam" id="3.40.50.880:FF:000008">
    <property type="entry name" value="Phosphoribosylformylglycinamidine synthase"/>
    <property type="match status" value="1"/>
</dbReference>
<dbReference type="FunFam" id="3.90.650.10:FF:000002">
    <property type="entry name" value="Phosphoribosylformylglycinamidine synthase"/>
    <property type="match status" value="1"/>
</dbReference>
<dbReference type="FunFam" id="3.90.650.10:FF:000005">
    <property type="entry name" value="Phosphoribosylformylglycinamidine synthase"/>
    <property type="match status" value="1"/>
</dbReference>
<dbReference type="Gene3D" id="3.40.50.880">
    <property type="match status" value="1"/>
</dbReference>
<dbReference type="Gene3D" id="1.10.8.750">
    <property type="entry name" value="Phosphoribosylformylglycinamidine synthase, linker domain"/>
    <property type="match status" value="1"/>
</dbReference>
<dbReference type="Gene3D" id="3.90.650.10">
    <property type="entry name" value="PurM-like C-terminal domain"/>
    <property type="match status" value="2"/>
</dbReference>
<dbReference type="Gene3D" id="3.30.1330.10">
    <property type="entry name" value="PurM-like, N-terminal domain"/>
    <property type="match status" value="2"/>
</dbReference>
<dbReference type="HAMAP" id="MF_00419">
    <property type="entry name" value="PurL_1"/>
    <property type="match status" value="1"/>
</dbReference>
<dbReference type="InterPro" id="IPR029062">
    <property type="entry name" value="Class_I_gatase-like"/>
</dbReference>
<dbReference type="InterPro" id="IPR040707">
    <property type="entry name" value="FGAR-AT_N"/>
</dbReference>
<dbReference type="InterPro" id="IPR055181">
    <property type="entry name" value="FGAR-AT_PurM_N-like"/>
</dbReference>
<dbReference type="InterPro" id="IPR010073">
    <property type="entry name" value="PurL_large"/>
</dbReference>
<dbReference type="InterPro" id="IPR041609">
    <property type="entry name" value="PurL_linker"/>
</dbReference>
<dbReference type="InterPro" id="IPR010918">
    <property type="entry name" value="PurM-like_C_dom"/>
</dbReference>
<dbReference type="InterPro" id="IPR036676">
    <property type="entry name" value="PurM-like_C_sf"/>
</dbReference>
<dbReference type="InterPro" id="IPR036921">
    <property type="entry name" value="PurM-like_N_sf"/>
</dbReference>
<dbReference type="InterPro" id="IPR036604">
    <property type="entry name" value="PurS-like_sf"/>
</dbReference>
<dbReference type="NCBIfam" id="TIGR01735">
    <property type="entry name" value="FGAM_synt"/>
    <property type="match status" value="1"/>
</dbReference>
<dbReference type="NCBIfam" id="NF003672">
    <property type="entry name" value="PRK05297.1"/>
    <property type="match status" value="1"/>
</dbReference>
<dbReference type="PANTHER" id="PTHR10099">
    <property type="entry name" value="PHOSPHORIBOSYLFORMYLGLYCINAMIDINE SYNTHASE"/>
    <property type="match status" value="1"/>
</dbReference>
<dbReference type="PANTHER" id="PTHR10099:SF1">
    <property type="entry name" value="PHOSPHORIBOSYLFORMYLGLYCINAMIDINE SYNTHASE"/>
    <property type="match status" value="1"/>
</dbReference>
<dbReference type="Pfam" id="PF02769">
    <property type="entry name" value="AIRS_C"/>
    <property type="match status" value="2"/>
</dbReference>
<dbReference type="Pfam" id="PF18072">
    <property type="entry name" value="FGAR-AT_linker"/>
    <property type="match status" value="1"/>
</dbReference>
<dbReference type="Pfam" id="PF18076">
    <property type="entry name" value="FGAR-AT_N"/>
    <property type="match status" value="1"/>
</dbReference>
<dbReference type="Pfam" id="PF22689">
    <property type="entry name" value="FGAR-AT_PurM_N-like"/>
    <property type="match status" value="1"/>
</dbReference>
<dbReference type="Pfam" id="PF13507">
    <property type="entry name" value="GATase_5"/>
    <property type="match status" value="1"/>
</dbReference>
<dbReference type="SMART" id="SM01211">
    <property type="entry name" value="GATase_5"/>
    <property type="match status" value="1"/>
</dbReference>
<dbReference type="SUPFAM" id="SSF52317">
    <property type="entry name" value="Class I glutamine amidotransferase-like"/>
    <property type="match status" value="1"/>
</dbReference>
<dbReference type="SUPFAM" id="SSF109736">
    <property type="entry name" value="FGAM synthase PurL, linker domain"/>
    <property type="match status" value="1"/>
</dbReference>
<dbReference type="SUPFAM" id="SSF56042">
    <property type="entry name" value="PurM C-terminal domain-like"/>
    <property type="match status" value="2"/>
</dbReference>
<dbReference type="SUPFAM" id="SSF55326">
    <property type="entry name" value="PurM N-terminal domain-like"/>
    <property type="match status" value="2"/>
</dbReference>
<dbReference type="SUPFAM" id="SSF82697">
    <property type="entry name" value="PurS-like"/>
    <property type="match status" value="1"/>
</dbReference>
<dbReference type="PROSITE" id="PS51273">
    <property type="entry name" value="GATASE_TYPE_1"/>
    <property type="match status" value="1"/>
</dbReference>
<keyword id="KW-0067">ATP-binding</keyword>
<keyword id="KW-0963">Cytoplasm</keyword>
<keyword id="KW-0315">Glutamine amidotransferase</keyword>
<keyword id="KW-0436">Ligase</keyword>
<keyword id="KW-0460">Magnesium</keyword>
<keyword id="KW-0479">Metal-binding</keyword>
<keyword id="KW-0547">Nucleotide-binding</keyword>
<keyword id="KW-0658">Purine biosynthesis</keyword>
<keyword id="KW-1185">Reference proteome</keyword>
<comment type="function">
    <text evidence="1">Phosphoribosylformylglycinamidine synthase involved in the purines biosynthetic pathway. Catalyzes the ATP-dependent conversion of formylglycinamide ribonucleotide (FGAR) and glutamine to yield formylglycinamidine ribonucleotide (FGAM) and glutamate.</text>
</comment>
<comment type="catalytic activity">
    <reaction evidence="1">
        <text>N(2)-formyl-N(1)-(5-phospho-beta-D-ribosyl)glycinamide + L-glutamine + ATP + H2O = 2-formamido-N(1)-(5-O-phospho-beta-D-ribosyl)acetamidine + L-glutamate + ADP + phosphate + H(+)</text>
        <dbReference type="Rhea" id="RHEA:17129"/>
        <dbReference type="ChEBI" id="CHEBI:15377"/>
        <dbReference type="ChEBI" id="CHEBI:15378"/>
        <dbReference type="ChEBI" id="CHEBI:29985"/>
        <dbReference type="ChEBI" id="CHEBI:30616"/>
        <dbReference type="ChEBI" id="CHEBI:43474"/>
        <dbReference type="ChEBI" id="CHEBI:58359"/>
        <dbReference type="ChEBI" id="CHEBI:147286"/>
        <dbReference type="ChEBI" id="CHEBI:147287"/>
        <dbReference type="ChEBI" id="CHEBI:456216"/>
        <dbReference type="EC" id="6.3.5.3"/>
    </reaction>
</comment>
<comment type="pathway">
    <text evidence="1">Purine metabolism; IMP biosynthesis via de novo pathway; 5-amino-1-(5-phospho-D-ribosyl)imidazole from N(2)-formyl-N(1)-(5-phospho-D-ribosyl)glycinamide: step 1/2.</text>
</comment>
<comment type="subunit">
    <text evidence="1">Monomer.</text>
</comment>
<comment type="subcellular location">
    <subcellularLocation>
        <location evidence="1">Cytoplasm</location>
    </subcellularLocation>
</comment>
<comment type="similarity">
    <text evidence="1">In the N-terminal section; belongs to the FGAMS family.</text>
</comment>
<gene>
    <name evidence="1" type="primary">purL</name>
    <name type="ordered locus">PSPTO_1459</name>
</gene>
<reference key="1">
    <citation type="journal article" date="2003" name="Proc. Natl. Acad. Sci. U.S.A.">
        <title>The complete genome sequence of the Arabidopsis and tomato pathogen Pseudomonas syringae pv. tomato DC3000.</title>
        <authorList>
            <person name="Buell C.R."/>
            <person name="Joardar V."/>
            <person name="Lindeberg M."/>
            <person name="Selengut J."/>
            <person name="Paulsen I.T."/>
            <person name="Gwinn M.L."/>
            <person name="Dodson R.J."/>
            <person name="DeBoy R.T."/>
            <person name="Durkin A.S."/>
            <person name="Kolonay J.F."/>
            <person name="Madupu R."/>
            <person name="Daugherty S.C."/>
            <person name="Brinkac L.M."/>
            <person name="Beanan M.J."/>
            <person name="Haft D.H."/>
            <person name="Nelson W.C."/>
            <person name="Davidsen T.M."/>
            <person name="Zafar N."/>
            <person name="Zhou L."/>
            <person name="Liu J."/>
            <person name="Yuan Q."/>
            <person name="Khouri H.M."/>
            <person name="Fedorova N.B."/>
            <person name="Tran B."/>
            <person name="Russell D."/>
            <person name="Berry K.J."/>
            <person name="Utterback T.R."/>
            <person name="Van Aken S.E."/>
            <person name="Feldblyum T.V."/>
            <person name="D'Ascenzo M."/>
            <person name="Deng W.-L."/>
            <person name="Ramos A.R."/>
            <person name="Alfano J.R."/>
            <person name="Cartinhour S."/>
            <person name="Chatterjee A.K."/>
            <person name="Delaney T.P."/>
            <person name="Lazarowitz S.G."/>
            <person name="Martin G.B."/>
            <person name="Schneider D.J."/>
            <person name="Tang X."/>
            <person name="Bender C.L."/>
            <person name="White O."/>
            <person name="Fraser C.M."/>
            <person name="Collmer A."/>
        </authorList>
    </citation>
    <scope>NUCLEOTIDE SEQUENCE [LARGE SCALE GENOMIC DNA]</scope>
    <source>
        <strain>ATCC BAA-871 / DC3000</strain>
    </source>
</reference>
<accession>Q886W6</accession>
<evidence type="ECO:0000255" key="1">
    <source>
        <dbReference type="HAMAP-Rule" id="MF_00419"/>
    </source>
</evidence>
<evidence type="ECO:0000256" key="2">
    <source>
        <dbReference type="SAM" id="MobiDB-lite"/>
    </source>
</evidence>
<sequence length="1298" mass="140647">MLILRGAPALSAFRHSKLLEQLKQKVSAVSGLYAEFAHFADVNDVLTGEEQQVLDRLLKYGPSVPVQEPAGRLFLVLPRFGTISPWSSKASDIARNCGLTKIQRIERGIAFYVEGQFSDADAQAIADSLHDRMTQLVLGDHAQAAGLFSHAEPKPLTAVDILGGGRAALEKANVELGLALAEDEIDYLITSFNGLGRNPHDIELMMFAQANSEHCRHKIFNASWDIDGQSQEKSLFGMIKNTYEMHSEGVLSAYKDNASVIVGSVAGRFFPDPDTRQYGAVQEPVHILMKVETHNHPTAIAPFPGAATGSGGEIRDEGATGRGAKPKAGLTGFTVSNLQIPGFVQPWEVPYGKPERIVTALDIMIEGPLGGAAFNNEFGRPALTGYFRTFEQSITTPHGDEVRGYHKPIMLAGGMGNIREDHVQKAEITVGSKLIVLGGPAMLIGLGGGAASSMATGTSSADLDFASVQRENPEMERRCQEVIDRCWQLGDRNPISFIHDVGAGGLSNAFPELVNDGDRGGRFELRNVPNDEPGMAPLEIWSNESQERYVLAVGVADYERFKAICERERCPFAVVGEATAEPQLTVTDSHFGNSPVDMPLEVLLGKAPRMHRSVAREAEIGDDFDPSTLDIEESVQRVLRHPAVASKSFLITIGDRSITGLVARDQMVGPWQVPVADCAVTATSFDVNTGEAMAMGERTPLALLDAPASGRMAIGETLTNIAASRIEKLSDIKLSANWMSAAGHPGEDARLYDTVKAVGMELCPELGITIPVGKDSMSMKTRWSDEGTEKSVTSPLSLIVTGFAPVVDIRKTLTPELRMDKGITDLILIDLGRGQNRMGASILAQTHGKLGRVAPDVDDAEDLKAFFAVIQGLNSDGHILSYHDRSDGGLLVSTLEMAFAGHCGLNLHLDGLADNVSELSAILFNEELGAVIQVRQDATPLVLAQFSAAGLEDCVAVIGQPINNDEVSISFLGEPVFSGQRRLLQRQWAETSYQIQRLRDNAECADQEFDALLEEDNPGLTVKLGFDVNEDIAAPYIKTGVRPQVAVLREQGVNGQVEMAAAFDRAGFNAIDVHMSDILAGRVDLNDFKGMVACGGFSYGDVLGAGEGWAKSALFNSRARDAFQGFFERSDSFTLGVCNGCQMLSNLHELIPGSEFWPHFVRNRSEQFEARVAMVQVQESASIFLQGMAGSRMPIAIAHGEGHAEFRNDDALLEADVSGTVALRFVDNHGKVTESYPANPNGSPRGIGGMTTLDGRVTIMMPHPERVFRAVQNSWRPEDWNEDAAWMRMFRNARAWVN</sequence>
<feature type="chain" id="PRO_0000100415" description="Phosphoribosylformylglycinamidine synthase">
    <location>
        <begin position="1"/>
        <end position="1298"/>
    </location>
</feature>
<feature type="domain" description="Glutamine amidotransferase type-1" evidence="1">
    <location>
        <begin position="1045"/>
        <end position="1298"/>
    </location>
</feature>
<feature type="region of interest" description="Disordered" evidence="2">
    <location>
        <begin position="303"/>
        <end position="327"/>
    </location>
</feature>
<feature type="active site" description="Nucleophile" evidence="1">
    <location>
        <position position="1138"/>
    </location>
</feature>
<feature type="active site" evidence="1">
    <location>
        <position position="1263"/>
    </location>
</feature>
<feature type="active site" evidence="1">
    <location>
        <position position="1265"/>
    </location>
</feature>
<feature type="binding site" evidence="1">
    <location>
        <begin position="305"/>
        <end position="316"/>
    </location>
    <ligand>
        <name>ATP</name>
        <dbReference type="ChEBI" id="CHEBI:30616"/>
    </ligand>
</feature>
<feature type="binding site" evidence="1">
    <location>
        <begin position="384"/>
        <end position="386"/>
    </location>
    <ligand>
        <name>ATP</name>
        <dbReference type="ChEBI" id="CHEBI:30616"/>
    </ligand>
</feature>
<feature type="binding site" evidence="1">
    <location>
        <position position="676"/>
    </location>
    <ligand>
        <name>ATP</name>
        <dbReference type="ChEBI" id="CHEBI:30616"/>
    </ligand>
</feature>
<feature type="binding site" evidence="1">
    <location>
        <position position="677"/>
    </location>
    <ligand>
        <name>Mg(2+)</name>
        <dbReference type="ChEBI" id="CHEBI:18420"/>
    </ligand>
</feature>
<feature type="binding site" evidence="1">
    <location>
        <position position="716"/>
    </location>
    <ligand>
        <name>Mg(2+)</name>
        <dbReference type="ChEBI" id="CHEBI:18420"/>
    </ligand>
</feature>
<feature type="binding site" evidence="1">
    <location>
        <position position="720"/>
    </location>
    <ligand>
        <name>Mg(2+)</name>
        <dbReference type="ChEBI" id="CHEBI:18420"/>
    </ligand>
</feature>
<feature type="binding site" evidence="1">
    <location>
        <position position="884"/>
    </location>
    <ligand>
        <name>Mg(2+)</name>
        <dbReference type="ChEBI" id="CHEBI:18420"/>
    </ligand>
</feature>
<feature type="binding site" evidence="1">
    <location>
        <position position="886"/>
    </location>
    <ligand>
        <name>ATP</name>
        <dbReference type="ChEBI" id="CHEBI:30616"/>
    </ligand>
</feature>